<feature type="chain" id="PRO_0000051166" description="Pre-mRNA-splicing factor PRP46">
    <location>
        <begin position="1"/>
        <end position="434"/>
    </location>
</feature>
<feature type="repeat" description="WD 1">
    <location>
        <begin position="120"/>
        <end position="160"/>
    </location>
</feature>
<feature type="repeat" description="WD 2">
    <location>
        <begin position="163"/>
        <end position="202"/>
    </location>
</feature>
<feature type="repeat" description="WD 3">
    <location>
        <begin position="205"/>
        <end position="244"/>
    </location>
</feature>
<feature type="repeat" description="WD 4">
    <location>
        <begin position="247"/>
        <end position="288"/>
    </location>
</feature>
<feature type="repeat" description="WD 5">
    <location>
        <begin position="290"/>
        <end position="329"/>
    </location>
</feature>
<feature type="repeat" description="WD 6">
    <location>
        <begin position="331"/>
        <end position="369"/>
    </location>
</feature>
<feature type="repeat" description="WD 7">
    <location>
        <begin position="380"/>
        <end position="419"/>
    </location>
</feature>
<evidence type="ECO:0000250" key="1"/>
<evidence type="ECO:0000305" key="2"/>
<name>PRP46_KLULA</name>
<accession>Q6CKE8</accession>
<comment type="function">
    <text evidence="1">Involved in pre-mRNA splicing and required for cell cycle progression at G2/M.</text>
</comment>
<comment type="subunit">
    <text evidence="1">Associated with the spliceosome.</text>
</comment>
<comment type="subcellular location">
    <subcellularLocation>
        <location evidence="1">Cytoplasm</location>
    </subcellularLocation>
    <subcellularLocation>
        <location evidence="1">Nucleus</location>
    </subcellularLocation>
</comment>
<comment type="similarity">
    <text evidence="2">Belongs to the WD repeat PRL1/PRL2 family.</text>
</comment>
<keyword id="KW-0963">Cytoplasm</keyword>
<keyword id="KW-0507">mRNA processing</keyword>
<keyword id="KW-0508">mRNA splicing</keyword>
<keyword id="KW-0539">Nucleus</keyword>
<keyword id="KW-1185">Reference proteome</keyword>
<keyword id="KW-0677">Repeat</keyword>
<keyword id="KW-0747">Spliceosome</keyword>
<keyword id="KW-0853">WD repeat</keyword>
<organism>
    <name type="scientific">Kluyveromyces lactis (strain ATCC 8585 / CBS 2359 / DSM 70799 / NBRC 1267 / NRRL Y-1140 / WM37)</name>
    <name type="common">Yeast</name>
    <name type="synonym">Candida sphaerica</name>
    <dbReference type="NCBI Taxonomy" id="284590"/>
    <lineage>
        <taxon>Eukaryota</taxon>
        <taxon>Fungi</taxon>
        <taxon>Dikarya</taxon>
        <taxon>Ascomycota</taxon>
        <taxon>Saccharomycotina</taxon>
        <taxon>Saccharomycetes</taxon>
        <taxon>Saccharomycetales</taxon>
        <taxon>Saccharomycetaceae</taxon>
        <taxon>Kluyveromyces</taxon>
    </lineage>
</organism>
<reference key="1">
    <citation type="journal article" date="2004" name="Nature">
        <title>Genome evolution in yeasts.</title>
        <authorList>
            <person name="Dujon B."/>
            <person name="Sherman D."/>
            <person name="Fischer G."/>
            <person name="Durrens P."/>
            <person name="Casaregola S."/>
            <person name="Lafontaine I."/>
            <person name="de Montigny J."/>
            <person name="Marck C."/>
            <person name="Neuveglise C."/>
            <person name="Talla E."/>
            <person name="Goffard N."/>
            <person name="Frangeul L."/>
            <person name="Aigle M."/>
            <person name="Anthouard V."/>
            <person name="Babour A."/>
            <person name="Barbe V."/>
            <person name="Barnay S."/>
            <person name="Blanchin S."/>
            <person name="Beckerich J.-M."/>
            <person name="Beyne E."/>
            <person name="Bleykasten C."/>
            <person name="Boisrame A."/>
            <person name="Boyer J."/>
            <person name="Cattolico L."/>
            <person name="Confanioleri F."/>
            <person name="de Daruvar A."/>
            <person name="Despons L."/>
            <person name="Fabre E."/>
            <person name="Fairhead C."/>
            <person name="Ferry-Dumazet H."/>
            <person name="Groppi A."/>
            <person name="Hantraye F."/>
            <person name="Hennequin C."/>
            <person name="Jauniaux N."/>
            <person name="Joyet P."/>
            <person name="Kachouri R."/>
            <person name="Kerrest A."/>
            <person name="Koszul R."/>
            <person name="Lemaire M."/>
            <person name="Lesur I."/>
            <person name="Ma L."/>
            <person name="Muller H."/>
            <person name="Nicaud J.-M."/>
            <person name="Nikolski M."/>
            <person name="Oztas S."/>
            <person name="Ozier-Kalogeropoulos O."/>
            <person name="Pellenz S."/>
            <person name="Potier S."/>
            <person name="Richard G.-F."/>
            <person name="Straub M.-L."/>
            <person name="Suleau A."/>
            <person name="Swennen D."/>
            <person name="Tekaia F."/>
            <person name="Wesolowski-Louvel M."/>
            <person name="Westhof E."/>
            <person name="Wirth B."/>
            <person name="Zeniou-Meyer M."/>
            <person name="Zivanovic Y."/>
            <person name="Bolotin-Fukuhara M."/>
            <person name="Thierry A."/>
            <person name="Bouchier C."/>
            <person name="Caudron B."/>
            <person name="Scarpelli C."/>
            <person name="Gaillardin C."/>
            <person name="Weissenbach J."/>
            <person name="Wincker P."/>
            <person name="Souciet J.-L."/>
        </authorList>
    </citation>
    <scope>NUCLEOTIDE SEQUENCE [LARGE SCALE GENOMIC DNA]</scope>
    <source>
        <strain>ATCC 8585 / CBS 2359 / DSM 70799 / NBRC 1267 / NRRL Y-1140 / WM37</strain>
    </source>
</reference>
<protein>
    <recommendedName>
        <fullName>Pre-mRNA-splicing factor PRP46</fullName>
    </recommendedName>
    <alternativeName>
        <fullName>Pre-mRNA-processing protein 46</fullName>
    </alternativeName>
</protein>
<dbReference type="EMBL" id="CR382126">
    <property type="protein sequence ID" value="CAG98299.1"/>
    <property type="molecule type" value="Genomic_DNA"/>
</dbReference>
<dbReference type="RefSeq" id="XP_455591.1">
    <property type="nucleotide sequence ID" value="XM_455591.1"/>
</dbReference>
<dbReference type="SMR" id="Q6CKE8"/>
<dbReference type="FunCoup" id="Q6CKE8">
    <property type="interactions" value="1051"/>
</dbReference>
<dbReference type="STRING" id="284590.Q6CKE8"/>
<dbReference type="PaxDb" id="284590-Q6CKE8"/>
<dbReference type="KEGG" id="kla:KLLA0_F11231g"/>
<dbReference type="eggNOG" id="KOG0285">
    <property type="taxonomic scope" value="Eukaryota"/>
</dbReference>
<dbReference type="HOGENOM" id="CLU_000288_72_0_1"/>
<dbReference type="InParanoid" id="Q6CKE8"/>
<dbReference type="OMA" id="FAMCFDQ"/>
<dbReference type="Proteomes" id="UP000000598">
    <property type="component" value="Chromosome F"/>
</dbReference>
<dbReference type="GO" id="GO:0071013">
    <property type="term" value="C:catalytic step 2 spliceosome"/>
    <property type="evidence" value="ECO:0007669"/>
    <property type="project" value="TreeGrafter"/>
</dbReference>
<dbReference type="GO" id="GO:0005737">
    <property type="term" value="C:cytoplasm"/>
    <property type="evidence" value="ECO:0007669"/>
    <property type="project" value="UniProtKB-SubCell"/>
</dbReference>
<dbReference type="GO" id="GO:0071011">
    <property type="term" value="C:precatalytic spliceosome"/>
    <property type="evidence" value="ECO:0007669"/>
    <property type="project" value="TreeGrafter"/>
</dbReference>
<dbReference type="GO" id="GO:0000974">
    <property type="term" value="C:Prp19 complex"/>
    <property type="evidence" value="ECO:0007669"/>
    <property type="project" value="TreeGrafter"/>
</dbReference>
<dbReference type="GO" id="GO:0000398">
    <property type="term" value="P:mRNA splicing, via spliceosome"/>
    <property type="evidence" value="ECO:0007669"/>
    <property type="project" value="InterPro"/>
</dbReference>
<dbReference type="CDD" id="cd00200">
    <property type="entry name" value="WD40"/>
    <property type="match status" value="1"/>
</dbReference>
<dbReference type="FunFam" id="2.130.10.10:FF:000012">
    <property type="entry name" value="Putative pleiotropic regulator 1"/>
    <property type="match status" value="1"/>
</dbReference>
<dbReference type="Gene3D" id="2.130.10.10">
    <property type="entry name" value="YVTN repeat-like/Quinoprotein amine dehydrogenase"/>
    <property type="match status" value="1"/>
</dbReference>
<dbReference type="InterPro" id="IPR020472">
    <property type="entry name" value="G-protein_beta_WD-40_rep"/>
</dbReference>
<dbReference type="InterPro" id="IPR045241">
    <property type="entry name" value="Prp46/PLRG1-like"/>
</dbReference>
<dbReference type="InterPro" id="IPR015943">
    <property type="entry name" value="WD40/YVTN_repeat-like_dom_sf"/>
</dbReference>
<dbReference type="InterPro" id="IPR019775">
    <property type="entry name" value="WD40_repeat_CS"/>
</dbReference>
<dbReference type="InterPro" id="IPR036322">
    <property type="entry name" value="WD40_repeat_dom_sf"/>
</dbReference>
<dbReference type="InterPro" id="IPR001680">
    <property type="entry name" value="WD40_rpt"/>
</dbReference>
<dbReference type="PANTHER" id="PTHR19923:SF0">
    <property type="entry name" value="PLEIOTROPIC REGULATOR 1"/>
    <property type="match status" value="1"/>
</dbReference>
<dbReference type="PANTHER" id="PTHR19923">
    <property type="entry name" value="WD40 REPEAT PROTEINPRL1/PRL2-RELATED"/>
    <property type="match status" value="1"/>
</dbReference>
<dbReference type="Pfam" id="PF00400">
    <property type="entry name" value="WD40"/>
    <property type="match status" value="6"/>
</dbReference>
<dbReference type="PRINTS" id="PR00320">
    <property type="entry name" value="GPROTEINBRPT"/>
</dbReference>
<dbReference type="SMART" id="SM00320">
    <property type="entry name" value="WD40"/>
    <property type="match status" value="7"/>
</dbReference>
<dbReference type="SUPFAM" id="SSF50978">
    <property type="entry name" value="WD40 repeat-like"/>
    <property type="match status" value="1"/>
</dbReference>
<dbReference type="PROSITE" id="PS00678">
    <property type="entry name" value="WD_REPEATS_1"/>
    <property type="match status" value="2"/>
</dbReference>
<dbReference type="PROSITE" id="PS50082">
    <property type="entry name" value="WD_REPEATS_2"/>
    <property type="match status" value="4"/>
</dbReference>
<dbReference type="PROSITE" id="PS50294">
    <property type="entry name" value="WD_REPEATS_REGION"/>
    <property type="match status" value="1"/>
</dbReference>
<gene>
    <name type="primary">PRP46</name>
    <name type="ordered locus">KLLA0F11231g</name>
</gene>
<sequence>MNTSSRSSEPSKVADDVYVQTRWNNEFKHADYLPESLQKCLDQEKTVLERYSELVEVSKTVANESSQALVKHTTKPGDQLVRRVFQQPHQQISLMERYEKTRSYKPQWHAPWKLSKVINGHTGWVRCVCVDPVDNEWFATGSNDTTIKIWDLAAGKLKITLIGHVMSVRDIAISKRHPYMFSASEDKLVKCWDLERNTAIRDFHGHLSGVHTVDVHPSLDIIATAGRDAVVRLWDIRSRSEIMVLPGHKSPINKVKCLPVDPQIISCSGDATVRLWDIIAGKASKVLTHHSRNIRDLTLHPAEFSFASVSTNDVRSWKLPEGQLLTNFQSQNTGILNTVSINHDNVLLAGGDDGTLCFYDYKTGHKYQSMMTTEVAGSLESERSILCSTFDVTGTRLITGEGDKSIKIWKQVPDATEDTFPGLPWNPTLISQRF</sequence>
<proteinExistence type="inferred from homology"/>